<dbReference type="EC" id="6.3.2.6" evidence="1"/>
<dbReference type="EMBL" id="CP001144">
    <property type="protein sequence ID" value="ACH75081.1"/>
    <property type="molecule type" value="Genomic_DNA"/>
</dbReference>
<dbReference type="RefSeq" id="WP_001171630.1">
    <property type="nucleotide sequence ID" value="NC_011205.1"/>
</dbReference>
<dbReference type="SMR" id="B5FQH7"/>
<dbReference type="KEGG" id="sed:SeD_A2853"/>
<dbReference type="HOGENOM" id="CLU_061495_2_1_6"/>
<dbReference type="UniPathway" id="UPA00074">
    <property type="reaction ID" value="UER00131"/>
</dbReference>
<dbReference type="Proteomes" id="UP000008322">
    <property type="component" value="Chromosome"/>
</dbReference>
<dbReference type="GO" id="GO:0005829">
    <property type="term" value="C:cytosol"/>
    <property type="evidence" value="ECO:0007669"/>
    <property type="project" value="TreeGrafter"/>
</dbReference>
<dbReference type="GO" id="GO:0005524">
    <property type="term" value="F:ATP binding"/>
    <property type="evidence" value="ECO:0007669"/>
    <property type="project" value="UniProtKB-KW"/>
</dbReference>
<dbReference type="GO" id="GO:0004639">
    <property type="term" value="F:phosphoribosylaminoimidazolesuccinocarboxamide synthase activity"/>
    <property type="evidence" value="ECO:0007669"/>
    <property type="project" value="UniProtKB-UniRule"/>
</dbReference>
<dbReference type="GO" id="GO:0006189">
    <property type="term" value="P:'de novo' IMP biosynthetic process"/>
    <property type="evidence" value="ECO:0007669"/>
    <property type="project" value="UniProtKB-UniRule"/>
</dbReference>
<dbReference type="GO" id="GO:0009236">
    <property type="term" value="P:cobalamin biosynthetic process"/>
    <property type="evidence" value="ECO:0007669"/>
    <property type="project" value="InterPro"/>
</dbReference>
<dbReference type="CDD" id="cd01415">
    <property type="entry name" value="SAICAR_synt_PurC"/>
    <property type="match status" value="1"/>
</dbReference>
<dbReference type="FunFam" id="3.30.200.20:FF:000086">
    <property type="entry name" value="Phosphoribosylaminoimidazole-succinocarboxamide synthase"/>
    <property type="match status" value="1"/>
</dbReference>
<dbReference type="FunFam" id="3.30.470.20:FF:000006">
    <property type="entry name" value="Phosphoribosylaminoimidazole-succinocarboxamide synthase"/>
    <property type="match status" value="1"/>
</dbReference>
<dbReference type="Gene3D" id="3.30.470.20">
    <property type="entry name" value="ATP-grasp fold, B domain"/>
    <property type="match status" value="1"/>
</dbReference>
<dbReference type="Gene3D" id="3.30.200.20">
    <property type="entry name" value="Phosphorylase Kinase, domain 1"/>
    <property type="match status" value="1"/>
</dbReference>
<dbReference type="HAMAP" id="MF_00137">
    <property type="entry name" value="SAICAR_synth"/>
    <property type="match status" value="1"/>
</dbReference>
<dbReference type="InterPro" id="IPR028923">
    <property type="entry name" value="SAICAR_synt/ADE2_N"/>
</dbReference>
<dbReference type="InterPro" id="IPR033934">
    <property type="entry name" value="SAICAR_synt_PurC"/>
</dbReference>
<dbReference type="InterPro" id="IPR001636">
    <property type="entry name" value="SAICAR_synth"/>
</dbReference>
<dbReference type="InterPro" id="IPR050089">
    <property type="entry name" value="SAICAR_synthetase"/>
</dbReference>
<dbReference type="InterPro" id="IPR018236">
    <property type="entry name" value="SAICAR_synthetase_CS"/>
</dbReference>
<dbReference type="NCBIfam" id="TIGR00081">
    <property type="entry name" value="purC"/>
    <property type="match status" value="1"/>
</dbReference>
<dbReference type="PANTHER" id="PTHR43599">
    <property type="entry name" value="MULTIFUNCTIONAL PROTEIN ADE2"/>
    <property type="match status" value="1"/>
</dbReference>
<dbReference type="PANTHER" id="PTHR43599:SF3">
    <property type="entry name" value="SI:DKEY-6E2.2"/>
    <property type="match status" value="1"/>
</dbReference>
<dbReference type="Pfam" id="PF01259">
    <property type="entry name" value="SAICAR_synt"/>
    <property type="match status" value="1"/>
</dbReference>
<dbReference type="SUPFAM" id="SSF56104">
    <property type="entry name" value="SAICAR synthase-like"/>
    <property type="match status" value="1"/>
</dbReference>
<dbReference type="PROSITE" id="PS01057">
    <property type="entry name" value="SAICAR_SYNTHETASE_1"/>
    <property type="match status" value="1"/>
</dbReference>
<dbReference type="PROSITE" id="PS01058">
    <property type="entry name" value="SAICAR_SYNTHETASE_2"/>
    <property type="match status" value="1"/>
</dbReference>
<gene>
    <name evidence="1" type="primary">purC</name>
    <name type="ordered locus">SeD_A2853</name>
</gene>
<name>PUR7_SALDC</name>
<reference key="1">
    <citation type="journal article" date="2011" name="J. Bacteriol.">
        <title>Comparative genomics of 28 Salmonella enterica isolates: evidence for CRISPR-mediated adaptive sublineage evolution.</title>
        <authorList>
            <person name="Fricke W.F."/>
            <person name="Mammel M.K."/>
            <person name="McDermott P.F."/>
            <person name="Tartera C."/>
            <person name="White D.G."/>
            <person name="Leclerc J.E."/>
            <person name="Ravel J."/>
            <person name="Cebula T.A."/>
        </authorList>
    </citation>
    <scope>NUCLEOTIDE SEQUENCE [LARGE SCALE GENOMIC DNA]</scope>
    <source>
        <strain>CT_02021853</strain>
    </source>
</reference>
<keyword id="KW-0067">ATP-binding</keyword>
<keyword id="KW-0436">Ligase</keyword>
<keyword id="KW-0547">Nucleotide-binding</keyword>
<keyword id="KW-0658">Purine biosynthesis</keyword>
<comment type="catalytic activity">
    <reaction evidence="1">
        <text>5-amino-1-(5-phospho-D-ribosyl)imidazole-4-carboxylate + L-aspartate + ATP = (2S)-2-[5-amino-1-(5-phospho-beta-D-ribosyl)imidazole-4-carboxamido]succinate + ADP + phosphate + 2 H(+)</text>
        <dbReference type="Rhea" id="RHEA:22628"/>
        <dbReference type="ChEBI" id="CHEBI:15378"/>
        <dbReference type="ChEBI" id="CHEBI:29991"/>
        <dbReference type="ChEBI" id="CHEBI:30616"/>
        <dbReference type="ChEBI" id="CHEBI:43474"/>
        <dbReference type="ChEBI" id="CHEBI:58443"/>
        <dbReference type="ChEBI" id="CHEBI:77657"/>
        <dbReference type="ChEBI" id="CHEBI:456216"/>
        <dbReference type="EC" id="6.3.2.6"/>
    </reaction>
</comment>
<comment type="pathway">
    <text evidence="1">Purine metabolism; IMP biosynthesis via de novo pathway; 5-amino-1-(5-phospho-D-ribosyl)imidazole-4-carboxamide from 5-amino-1-(5-phospho-D-ribosyl)imidazole-4-carboxylate: step 1/2.</text>
</comment>
<comment type="similarity">
    <text evidence="1">Belongs to the SAICAR synthetase family.</text>
</comment>
<organism>
    <name type="scientific">Salmonella dublin (strain CT_02021853)</name>
    <dbReference type="NCBI Taxonomy" id="439851"/>
    <lineage>
        <taxon>Bacteria</taxon>
        <taxon>Pseudomonadati</taxon>
        <taxon>Pseudomonadota</taxon>
        <taxon>Gammaproteobacteria</taxon>
        <taxon>Enterobacterales</taxon>
        <taxon>Enterobacteriaceae</taxon>
        <taxon>Salmonella</taxon>
    </lineage>
</organism>
<accession>B5FQH7</accession>
<sequence>MQKQAELYRGKAKTVYSTENPDLLVLEFRNDTSAGDGARIEQFDRKGMVNNKFNHFIMTKLAEAGIPTQMERLLSDTECLVKKLEMVPVECVVRNRAAGSLVKRLGVEEGMELNPPIFDLFLKNDALHDPMVNSSYCETFGWVSQENLARMKELTYKANDVLKKLFDDAGLILVDFKLEFGLYKGEVVLGDEFSPDGSRLWDKETLDKMDKDRFRQSLGGLIEAYEAVAHRLGVKLD</sequence>
<feature type="chain" id="PRO_1000096009" description="Phosphoribosylaminoimidazole-succinocarboxamide synthase">
    <location>
        <begin position="1"/>
        <end position="237"/>
    </location>
</feature>
<proteinExistence type="inferred from homology"/>
<protein>
    <recommendedName>
        <fullName evidence="1">Phosphoribosylaminoimidazole-succinocarboxamide synthase</fullName>
        <ecNumber evidence="1">6.3.2.6</ecNumber>
    </recommendedName>
    <alternativeName>
        <fullName evidence="1">SAICAR synthetase</fullName>
    </alternativeName>
</protein>
<evidence type="ECO:0000255" key="1">
    <source>
        <dbReference type="HAMAP-Rule" id="MF_00137"/>
    </source>
</evidence>